<name>SGPL_LEGPH</name>
<sequence length="601" mass="66549">MFGFVSDLLTAAVSSLDELLQDTPAHQIILGTAALYFLYNQYHNPSISRWYRSRNNASMKQRIIDSAYALAKNLPGVNQIIEKELNKELSSTREKLRIQRSGMTLREEIPEEGLSPQDILSAFDVDVEKCHFDFLSVTNDSPEREFLVERGDGKDSGALYAIHPKELTELLKEVYGATALTNPLHDKWPRINAMQAEVIRWCQNLFHGSKECYGLLTHGGTTSIIEAMAAYVIRARAKGIDYPEIVVPETAHAAFKKAAELTGAILITVPVDKKTGAVNPKVMSSYITRNTAVIVGSAPSFMNGIHDPVSELGQLAKKKNVPFHVDACLGGFLTAFLDTSSEPMDFRVPGVTSISADLHKYGCCPKGTSVCLFSEDSPALSVYAALNWSGGLYATPGILDGSTSGARVAEVYATLSYYGKNKYQEIAKSIITLRNAIQKELTTLLEEGNGLTSEDIYVYGNPQWSILGFRSNTCNAHFIADELEKRGWKLNLLQNPDGFHLCLTHVHTLVKGFETQFIKDLREAVIDVKNYPPGKKPSGNVKVYGAVGMMPIELQREICKQYQKARLNYTSASPGSLRIFTNVPVEEDEGLRNRKTEKYKV</sequence>
<protein>
    <recommendedName>
        <fullName>Probable sphingosine-1-phosphate lyase</fullName>
        <shortName>S1PL</shortName>
        <shortName>SP-lyase</shortName>
        <shortName>SPL</shortName>
        <ecNumber>4.1.2.27</ecNumber>
    </recommendedName>
    <alternativeName>
        <fullName>Sphingosine-1-phosphate aldolase</fullName>
    </alternativeName>
</protein>
<comment type="function">
    <text evidence="1">Cleaves phosphorylated sphingoid bases (PSBs), such as sphingosine-1-phosphate, into fatty aldehydes and phosphoethanolamine (By similarity). Possibly implicated in influencing the macrophage autophagy pathway.</text>
</comment>
<comment type="catalytic activity">
    <reaction>
        <text>sphinganine 1-phosphate = hexadecanal + phosphoethanolamine</text>
        <dbReference type="Rhea" id="RHEA:18593"/>
        <dbReference type="ChEBI" id="CHEBI:17600"/>
        <dbReference type="ChEBI" id="CHEBI:57939"/>
        <dbReference type="ChEBI" id="CHEBI:58190"/>
        <dbReference type="EC" id="4.1.2.27"/>
    </reaction>
</comment>
<comment type="cofactor">
    <cofactor evidence="1">
        <name>pyridoxal 5'-phosphate</name>
        <dbReference type="ChEBI" id="CHEBI:597326"/>
    </cofactor>
</comment>
<comment type="similarity">
    <text evidence="2">Belongs to the group II decarboxylase family. Sphingosine-1-phosphate lyase subfamily.</text>
</comment>
<comment type="sequence caution" evidence="2">
    <conflict type="erroneous initiation">
        <sequence resource="EMBL-CDS" id="AAU28241"/>
    </conflict>
</comment>
<gene>
    <name type="ordered locus">lpg2176</name>
</gene>
<reference key="1">
    <citation type="journal article" date="2004" name="Science">
        <title>The genomic sequence of the accidental pathogen Legionella pneumophila.</title>
        <authorList>
            <person name="Chien M."/>
            <person name="Morozova I."/>
            <person name="Shi S."/>
            <person name="Sheng H."/>
            <person name="Chen J."/>
            <person name="Gomez S.M."/>
            <person name="Asamani G."/>
            <person name="Hill K."/>
            <person name="Nuara J."/>
            <person name="Feder M."/>
            <person name="Rineer J."/>
            <person name="Greenberg J.J."/>
            <person name="Steshenko V."/>
            <person name="Park S.H."/>
            <person name="Zhao B."/>
            <person name="Teplitskaya E."/>
            <person name="Edwards J.R."/>
            <person name="Pampou S."/>
            <person name="Georghiou A."/>
            <person name="Chou I.-C."/>
            <person name="Iannuccilli W."/>
            <person name="Ulz M.E."/>
            <person name="Kim D.H."/>
            <person name="Geringer-Sameth A."/>
            <person name="Goldsberry C."/>
            <person name="Morozov P."/>
            <person name="Fischer S.G."/>
            <person name="Segal G."/>
            <person name="Qu X."/>
            <person name="Rzhetsky A."/>
            <person name="Zhang P."/>
            <person name="Cayanis E."/>
            <person name="De Jong P.J."/>
            <person name="Ju J."/>
            <person name="Kalachikov S."/>
            <person name="Shuman H.A."/>
            <person name="Russo J.J."/>
        </authorList>
    </citation>
    <scope>NUCLEOTIDE SEQUENCE [LARGE SCALE GENOMIC DNA]</scope>
    <source>
        <strain>Philadelphia 1 / ATCC 33152 / DSM 7513</strain>
    </source>
</reference>
<reference key="2">
    <citation type="journal article" date="2006" name="Curr. Opin. Microbiol.">
        <title>Adaptation of Legionella pneumophila to the host environment: role of protein secretion, effectors and eukaryotic-like proteins.</title>
        <authorList>
            <person name="Brueggemann H."/>
            <person name="Cazalet C."/>
            <person name="Buchrieser C."/>
        </authorList>
    </citation>
    <scope>POSSIBLE FUNCTION</scope>
</reference>
<organism>
    <name type="scientific">Legionella pneumophila subsp. pneumophila (strain Philadelphia 1 / ATCC 33152 / DSM 7513)</name>
    <dbReference type="NCBI Taxonomy" id="272624"/>
    <lineage>
        <taxon>Bacteria</taxon>
        <taxon>Pseudomonadati</taxon>
        <taxon>Pseudomonadota</taxon>
        <taxon>Gammaproteobacteria</taxon>
        <taxon>Legionellales</taxon>
        <taxon>Legionellaceae</taxon>
        <taxon>Legionella</taxon>
    </lineage>
</organism>
<evidence type="ECO:0000250" key="1"/>
<evidence type="ECO:0000305" key="2"/>
<dbReference type="EC" id="4.1.2.27"/>
<dbReference type="EMBL" id="AE017354">
    <property type="protein sequence ID" value="AAU28241.1"/>
    <property type="status" value="ALT_INIT"/>
    <property type="molecule type" value="Genomic_DNA"/>
</dbReference>
<dbReference type="RefSeq" id="YP_096188.1">
    <property type="nucleotide sequence ID" value="NC_002942.5"/>
</dbReference>
<dbReference type="SMR" id="Q5ZTI6"/>
<dbReference type="STRING" id="272624.lpg2176"/>
<dbReference type="PaxDb" id="272624-lpg2176"/>
<dbReference type="KEGG" id="lpn:lpg2176"/>
<dbReference type="PATRIC" id="fig|272624.6.peg.2285"/>
<dbReference type="eggNOG" id="COG0076">
    <property type="taxonomic scope" value="Bacteria"/>
</dbReference>
<dbReference type="HOGENOM" id="CLU_028929_1_0_6"/>
<dbReference type="OrthoDB" id="9803665at2"/>
<dbReference type="Proteomes" id="UP000000609">
    <property type="component" value="Chromosome"/>
</dbReference>
<dbReference type="GO" id="GO:0016020">
    <property type="term" value="C:membrane"/>
    <property type="evidence" value="ECO:0007669"/>
    <property type="project" value="GOC"/>
</dbReference>
<dbReference type="GO" id="GO:0016831">
    <property type="term" value="F:carboxy-lyase activity"/>
    <property type="evidence" value="ECO:0007669"/>
    <property type="project" value="UniProtKB-ARBA"/>
</dbReference>
<dbReference type="GO" id="GO:0030170">
    <property type="term" value="F:pyridoxal phosphate binding"/>
    <property type="evidence" value="ECO:0007669"/>
    <property type="project" value="InterPro"/>
</dbReference>
<dbReference type="GO" id="GO:0008117">
    <property type="term" value="F:sphinganine-1-phosphate aldolase activity"/>
    <property type="evidence" value="ECO:0007669"/>
    <property type="project" value="UniProtKB-EC"/>
</dbReference>
<dbReference type="GO" id="GO:0019752">
    <property type="term" value="P:carboxylic acid metabolic process"/>
    <property type="evidence" value="ECO:0007669"/>
    <property type="project" value="InterPro"/>
</dbReference>
<dbReference type="GO" id="GO:0030149">
    <property type="term" value="P:sphingolipid catabolic process"/>
    <property type="evidence" value="ECO:0007669"/>
    <property type="project" value="TreeGrafter"/>
</dbReference>
<dbReference type="GO" id="GO:0075071">
    <property type="term" value="P:symbiont-mediated perturbation of host autophagy"/>
    <property type="evidence" value="ECO:0000269"/>
    <property type="project" value="SigSci"/>
</dbReference>
<dbReference type="Gene3D" id="3.90.1150.10">
    <property type="entry name" value="Aspartate Aminotransferase, domain 1"/>
    <property type="match status" value="2"/>
</dbReference>
<dbReference type="Gene3D" id="3.40.640.10">
    <property type="entry name" value="Type I PLP-dependent aspartate aminotransferase-like (Major domain)"/>
    <property type="match status" value="1"/>
</dbReference>
<dbReference type="InterPro" id="IPR050477">
    <property type="entry name" value="GrpII_AminoAcid_Decarb"/>
</dbReference>
<dbReference type="InterPro" id="IPR002129">
    <property type="entry name" value="PyrdxlP-dep_de-COase"/>
</dbReference>
<dbReference type="InterPro" id="IPR015424">
    <property type="entry name" value="PyrdxlP-dep_Trfase"/>
</dbReference>
<dbReference type="InterPro" id="IPR015421">
    <property type="entry name" value="PyrdxlP-dep_Trfase_major"/>
</dbReference>
<dbReference type="InterPro" id="IPR015422">
    <property type="entry name" value="PyrdxlP-dep_Trfase_small"/>
</dbReference>
<dbReference type="PANTHER" id="PTHR42735">
    <property type="match status" value="1"/>
</dbReference>
<dbReference type="PANTHER" id="PTHR42735:SF6">
    <property type="entry name" value="SPHINGOSINE-1-PHOSPHATE LYASE 1"/>
    <property type="match status" value="1"/>
</dbReference>
<dbReference type="Pfam" id="PF00282">
    <property type="entry name" value="Pyridoxal_deC"/>
    <property type="match status" value="1"/>
</dbReference>
<dbReference type="SUPFAM" id="SSF53383">
    <property type="entry name" value="PLP-dependent transferases"/>
    <property type="match status" value="1"/>
</dbReference>
<proteinExistence type="inferred from homology"/>
<accession>Q5ZTI6</accession>
<keyword id="KW-0456">Lyase</keyword>
<keyword id="KW-0663">Pyridoxal phosphate</keyword>
<keyword id="KW-1185">Reference proteome</keyword>
<feature type="chain" id="PRO_0000248941" description="Probable sphingosine-1-phosphate lyase">
    <location>
        <begin position="1"/>
        <end position="601"/>
    </location>
</feature>
<feature type="modified residue" description="N6-(pyridoxal phosphate)lysine" evidence="1">
    <location>
        <position position="360"/>
    </location>
</feature>